<gene>
    <name type="primary">KCNIP4</name>
</gene>
<keyword id="KW-0106">Calcium</keyword>
<keyword id="KW-1003">Cell membrane</keyword>
<keyword id="KW-0963">Cytoplasm</keyword>
<keyword id="KW-0407">Ion channel</keyword>
<keyword id="KW-0406">Ion transport</keyword>
<keyword id="KW-0472">Membrane</keyword>
<keyword id="KW-0479">Metal-binding</keyword>
<keyword id="KW-0576">Peroxisome</keyword>
<keyword id="KW-0597">Phosphoprotein</keyword>
<keyword id="KW-0630">Potassium</keyword>
<keyword id="KW-0631">Potassium channel</keyword>
<keyword id="KW-0633">Potassium transport</keyword>
<keyword id="KW-1185">Reference proteome</keyword>
<keyword id="KW-0677">Repeat</keyword>
<keyword id="KW-0813">Transport</keyword>
<keyword id="KW-0851">Voltage-gated channel</keyword>
<feature type="chain" id="PRO_0000245020" description="Kv channel-interacting protein 4">
    <location>
        <begin position="1"/>
        <end position="250"/>
    </location>
</feature>
<feature type="domain" description="EF-hand 1; degenerate" evidence="6">
    <location>
        <begin position="61"/>
        <end position="117"/>
    </location>
</feature>
<feature type="domain" description="EF-hand 2" evidence="5">
    <location>
        <begin position="120"/>
        <end position="155"/>
    </location>
</feature>
<feature type="domain" description="EF-hand 3" evidence="5">
    <location>
        <begin position="156"/>
        <end position="191"/>
    </location>
</feature>
<feature type="domain" description="EF-hand 4" evidence="5">
    <location>
        <begin position="204"/>
        <end position="239"/>
    </location>
</feature>
<feature type="region of interest" description="KIS" evidence="1">
    <location>
        <begin position="2"/>
        <end position="44"/>
    </location>
</feature>
<feature type="region of interest" description="Interaction with KCND2" evidence="4">
    <location>
        <begin position="237"/>
        <end position="250"/>
    </location>
</feature>
<feature type="binding site" evidence="5">
    <location>
        <position position="133"/>
    </location>
    <ligand>
        <name>Ca(2+)</name>
        <dbReference type="ChEBI" id="CHEBI:29108"/>
        <label>1</label>
    </ligand>
</feature>
<feature type="binding site" evidence="5">
    <location>
        <position position="135"/>
    </location>
    <ligand>
        <name>Ca(2+)</name>
        <dbReference type="ChEBI" id="CHEBI:29108"/>
        <label>1</label>
    </ligand>
</feature>
<feature type="binding site" evidence="5">
    <location>
        <position position="137"/>
    </location>
    <ligand>
        <name>Ca(2+)</name>
        <dbReference type="ChEBI" id="CHEBI:29108"/>
        <label>1</label>
    </ligand>
</feature>
<feature type="binding site" evidence="5">
    <location>
        <position position="144"/>
    </location>
    <ligand>
        <name>Ca(2+)</name>
        <dbReference type="ChEBI" id="CHEBI:29108"/>
        <label>1</label>
    </ligand>
</feature>
<feature type="binding site" evidence="5">
    <location>
        <position position="169"/>
    </location>
    <ligand>
        <name>Ca(2+)</name>
        <dbReference type="ChEBI" id="CHEBI:29108"/>
        <label>2</label>
    </ligand>
</feature>
<feature type="binding site" evidence="5">
    <location>
        <position position="171"/>
    </location>
    <ligand>
        <name>Ca(2+)</name>
        <dbReference type="ChEBI" id="CHEBI:29108"/>
        <label>2</label>
    </ligand>
</feature>
<feature type="binding site" evidence="5">
    <location>
        <position position="173"/>
    </location>
    <ligand>
        <name>Ca(2+)</name>
        <dbReference type="ChEBI" id="CHEBI:29108"/>
        <label>2</label>
    </ligand>
</feature>
<feature type="binding site" evidence="5">
    <location>
        <position position="175"/>
    </location>
    <ligand>
        <name>Ca(2+)</name>
        <dbReference type="ChEBI" id="CHEBI:29108"/>
        <label>2</label>
    </ligand>
</feature>
<feature type="binding site" evidence="5">
    <location>
        <position position="180"/>
    </location>
    <ligand>
        <name>Ca(2+)</name>
        <dbReference type="ChEBI" id="CHEBI:29108"/>
        <label>2</label>
    </ligand>
</feature>
<feature type="binding site" evidence="5">
    <location>
        <position position="217"/>
    </location>
    <ligand>
        <name>Ca(2+)</name>
        <dbReference type="ChEBI" id="CHEBI:29108"/>
        <label>3</label>
    </ligand>
</feature>
<feature type="binding site" evidence="5">
    <location>
        <position position="219"/>
    </location>
    <ligand>
        <name>Ca(2+)</name>
        <dbReference type="ChEBI" id="CHEBI:29108"/>
        <label>3</label>
    </ligand>
</feature>
<feature type="binding site" evidence="5">
    <location>
        <position position="221"/>
    </location>
    <ligand>
        <name>Ca(2+)</name>
        <dbReference type="ChEBI" id="CHEBI:29108"/>
        <label>3</label>
    </ligand>
</feature>
<feature type="binding site" evidence="5">
    <location>
        <position position="228"/>
    </location>
    <ligand>
        <name>Ca(2+)</name>
        <dbReference type="ChEBI" id="CHEBI:29108"/>
        <label>3</label>
    </ligand>
</feature>
<feature type="modified residue" description="Phosphoserine" evidence="2">
    <location>
        <position position="17"/>
    </location>
</feature>
<feature type="modified residue" description="Phosphoserine" evidence="2">
    <location>
        <position position="56"/>
    </location>
</feature>
<organism>
    <name type="scientific">Bos taurus</name>
    <name type="common">Bovine</name>
    <dbReference type="NCBI Taxonomy" id="9913"/>
    <lineage>
        <taxon>Eukaryota</taxon>
        <taxon>Metazoa</taxon>
        <taxon>Chordata</taxon>
        <taxon>Craniata</taxon>
        <taxon>Vertebrata</taxon>
        <taxon>Euteleostomi</taxon>
        <taxon>Mammalia</taxon>
        <taxon>Eutheria</taxon>
        <taxon>Laurasiatheria</taxon>
        <taxon>Artiodactyla</taxon>
        <taxon>Ruminantia</taxon>
        <taxon>Pecora</taxon>
        <taxon>Bovidae</taxon>
        <taxon>Bovinae</taxon>
        <taxon>Bos</taxon>
    </lineage>
</organism>
<proteinExistence type="evidence at transcript level"/>
<comment type="function">
    <text evidence="2 3">Regulatory subunit of Kv4/D (Shal)-type voltage-gated rapidly inactivating A-type potassium channels. Modulates KCND2 channel density, inactivation kinetics and rate of recovery from inactivation in a calcium-dependent and isoform-specific manner. Modulates KCND3/Kv4.3 currents. Isoform 4 does not increase KCND2 expression at the cell membrane. Isoform 4 retains KCND3 in the endoplasmic reticulum and negatively regulates its expression at the cell membrane.</text>
</comment>
<comment type="subunit">
    <text evidence="2 3">Component of heteromultimeric potassium channels (By similarity). Identified in potassium channel complexes containing KCND1, KCND2, KCND3, KCNIP1, KCNIP2, KCNIP3, KCNIP4, DPP6 and DPP10 (By similarity). Interacts with KCND2 (By similarity). Interacts with KCND3 (By similarity). Interacts with the C-terminus of PSEN2 and probably PSEN1 (By similarity).</text>
</comment>
<comment type="subcellular location">
    <subcellularLocation>
        <location evidence="3">Cell membrane</location>
        <topology evidence="3">Peripheral membrane protein</topology>
    </subcellularLocation>
    <subcellularLocation>
        <location evidence="3">Cytoplasm</location>
    </subcellularLocation>
    <subcellularLocation>
        <location evidence="3">Peroxisome</location>
    </subcellularLocation>
</comment>
<comment type="domain">
    <text evidence="2">The KIS (K-channel inactivation suppressor) domain is required for converting A-type Kv4 current to a slowly inactivating delayed rectifier potassium current.</text>
</comment>
<comment type="similarity">
    <text evidence="6">Belongs to the recoverin family.</text>
</comment>
<name>KCIP4_BOVIN</name>
<dbReference type="EMBL" id="BC112750">
    <property type="protein sequence ID" value="AAI12751.1"/>
    <property type="molecule type" value="mRNA"/>
</dbReference>
<dbReference type="RefSeq" id="NP_001070403.1">
    <property type="nucleotide sequence ID" value="NM_001076935.2"/>
</dbReference>
<dbReference type="BMRB" id="Q2KI69"/>
<dbReference type="SMR" id="Q2KI69"/>
<dbReference type="FunCoup" id="Q2KI69">
    <property type="interactions" value="1260"/>
</dbReference>
<dbReference type="STRING" id="9913.ENSBTAP00000073596"/>
<dbReference type="PaxDb" id="9913-ENSBTAP00000054167"/>
<dbReference type="Ensembl" id="ENSBTAT00000076235.2">
    <property type="protein sequence ID" value="ENSBTAP00000073596.2"/>
    <property type="gene ID" value="ENSBTAG00000047743.3"/>
</dbReference>
<dbReference type="GeneID" id="614299"/>
<dbReference type="KEGG" id="bta:614299"/>
<dbReference type="CTD" id="80333"/>
<dbReference type="VEuPathDB" id="HostDB:ENSBTAG00000047743"/>
<dbReference type="VGNC" id="VGNC:30452">
    <property type="gene designation" value="KCNIP4"/>
</dbReference>
<dbReference type="eggNOG" id="KOG0044">
    <property type="taxonomic scope" value="Eukaryota"/>
</dbReference>
<dbReference type="GeneTree" id="ENSGT00940000158985"/>
<dbReference type="HOGENOM" id="CLU_072366_2_2_1"/>
<dbReference type="InParanoid" id="Q2KI69"/>
<dbReference type="OrthoDB" id="191686at2759"/>
<dbReference type="TreeFam" id="TF318560"/>
<dbReference type="Reactome" id="R-BTA-5576894">
    <property type="pathway name" value="Phase 1 - inactivation of fast Na+ channels"/>
</dbReference>
<dbReference type="Proteomes" id="UP000009136">
    <property type="component" value="Chromosome 6"/>
</dbReference>
<dbReference type="Bgee" id="ENSBTAG00000047743">
    <property type="expression patterns" value="Expressed in occipital lobe and 66 other cell types or tissues"/>
</dbReference>
<dbReference type="GO" id="GO:0005777">
    <property type="term" value="C:peroxisome"/>
    <property type="evidence" value="ECO:0000250"/>
    <property type="project" value="UniProtKB"/>
</dbReference>
<dbReference type="GO" id="GO:0008076">
    <property type="term" value="C:voltage-gated potassium channel complex"/>
    <property type="evidence" value="ECO:0000318"/>
    <property type="project" value="GO_Central"/>
</dbReference>
<dbReference type="GO" id="GO:0005509">
    <property type="term" value="F:calcium ion binding"/>
    <property type="evidence" value="ECO:0000318"/>
    <property type="project" value="GO_Central"/>
</dbReference>
<dbReference type="GO" id="GO:0005267">
    <property type="term" value="F:potassium channel activity"/>
    <property type="evidence" value="ECO:0007669"/>
    <property type="project" value="UniProtKB-KW"/>
</dbReference>
<dbReference type="GO" id="GO:0015459">
    <property type="term" value="F:potassium channel regulator activity"/>
    <property type="evidence" value="ECO:0000318"/>
    <property type="project" value="GO_Central"/>
</dbReference>
<dbReference type="GO" id="GO:1901379">
    <property type="term" value="P:regulation of potassium ion transmembrane transport"/>
    <property type="evidence" value="ECO:0000318"/>
    <property type="project" value="GO_Central"/>
</dbReference>
<dbReference type="GO" id="GO:0009966">
    <property type="term" value="P:regulation of signal transduction"/>
    <property type="evidence" value="ECO:0000318"/>
    <property type="project" value="GO_Central"/>
</dbReference>
<dbReference type="CDD" id="cd00051">
    <property type="entry name" value="EFh"/>
    <property type="match status" value="2"/>
</dbReference>
<dbReference type="FunFam" id="1.10.238.10:FF:000043">
    <property type="entry name" value="Kv channel-interacting protein 1 isoform 2"/>
    <property type="match status" value="1"/>
</dbReference>
<dbReference type="Gene3D" id="1.10.238.10">
    <property type="entry name" value="EF-hand"/>
    <property type="match status" value="1"/>
</dbReference>
<dbReference type="InterPro" id="IPR011992">
    <property type="entry name" value="EF-hand-dom_pair"/>
</dbReference>
<dbReference type="InterPro" id="IPR018247">
    <property type="entry name" value="EF_Hand_1_Ca_BS"/>
</dbReference>
<dbReference type="InterPro" id="IPR002048">
    <property type="entry name" value="EF_hand_dom"/>
</dbReference>
<dbReference type="InterPro" id="IPR028846">
    <property type="entry name" value="Recoverin"/>
</dbReference>
<dbReference type="PANTHER" id="PTHR23055">
    <property type="entry name" value="CALCIUM BINDING PROTEINS"/>
    <property type="match status" value="1"/>
</dbReference>
<dbReference type="PANTHER" id="PTHR23055:SF30">
    <property type="entry name" value="KV CHANNEL-INTERACTING PROTEIN 4"/>
    <property type="match status" value="1"/>
</dbReference>
<dbReference type="Pfam" id="PF13499">
    <property type="entry name" value="EF-hand_7"/>
    <property type="match status" value="1"/>
</dbReference>
<dbReference type="Pfam" id="PF13833">
    <property type="entry name" value="EF-hand_8"/>
    <property type="match status" value="1"/>
</dbReference>
<dbReference type="PRINTS" id="PR00450">
    <property type="entry name" value="RECOVERIN"/>
</dbReference>
<dbReference type="SMART" id="SM00054">
    <property type="entry name" value="EFh"/>
    <property type="match status" value="3"/>
</dbReference>
<dbReference type="SUPFAM" id="SSF47473">
    <property type="entry name" value="EF-hand"/>
    <property type="match status" value="1"/>
</dbReference>
<dbReference type="PROSITE" id="PS00018">
    <property type="entry name" value="EF_HAND_1"/>
    <property type="match status" value="3"/>
</dbReference>
<dbReference type="PROSITE" id="PS50222">
    <property type="entry name" value="EF_HAND_2"/>
    <property type="match status" value="3"/>
</dbReference>
<protein>
    <recommendedName>
        <fullName>Kv channel-interacting protein 4</fullName>
        <shortName>KChIP4</shortName>
    </recommendedName>
</protein>
<sequence length="250" mass="28731">MNVRRVESISAQLEEASSTGGFLYTQNSTKRSIKERLMKLLPCSAAKTSSPAVQNSVEDELEMATVRHRPEALELLEAQSKFTKKELQILYRGFKNECPSGVVNEDTFKEIYSQFFPQGDSTTYAHFLFNAFDTDHNGAVSFEDFIKGLSILLRGTVQEKLNWAFNLYDINKDGYITKEEMLDIMKAIYDMMGKCTYPVLKEDAPRQHVETFFQKMDKNKDGVVTIDEFIESCQKDENIMRSMQLFENVI</sequence>
<accession>Q2KI69</accession>
<reference key="1">
    <citation type="submission" date="2006-01" db="EMBL/GenBank/DDBJ databases">
        <authorList>
            <consortium name="NIH - Mammalian Gene Collection (MGC) project"/>
        </authorList>
    </citation>
    <scope>NUCLEOTIDE SEQUENCE [LARGE SCALE MRNA]</scope>
    <source>
        <strain>Hereford</strain>
        <tissue>Hypothalamus</tissue>
    </source>
</reference>
<evidence type="ECO:0000250" key="1"/>
<evidence type="ECO:0000250" key="2">
    <source>
        <dbReference type="UniProtKB" id="Q6PHZ8"/>
    </source>
</evidence>
<evidence type="ECO:0000250" key="3">
    <source>
        <dbReference type="UniProtKB" id="Q6PIL6"/>
    </source>
</evidence>
<evidence type="ECO:0000250" key="4">
    <source>
        <dbReference type="UniProtKB" id="Q8R426"/>
    </source>
</evidence>
<evidence type="ECO:0000255" key="5">
    <source>
        <dbReference type="PROSITE-ProRule" id="PRU00448"/>
    </source>
</evidence>
<evidence type="ECO:0000305" key="6"/>